<reference key="1">
    <citation type="journal article" date="2009" name="PLoS Genet.">
        <title>Organised genome dynamics in the Escherichia coli species results in highly diverse adaptive paths.</title>
        <authorList>
            <person name="Touchon M."/>
            <person name="Hoede C."/>
            <person name="Tenaillon O."/>
            <person name="Barbe V."/>
            <person name="Baeriswyl S."/>
            <person name="Bidet P."/>
            <person name="Bingen E."/>
            <person name="Bonacorsi S."/>
            <person name="Bouchier C."/>
            <person name="Bouvet O."/>
            <person name="Calteau A."/>
            <person name="Chiapello H."/>
            <person name="Clermont O."/>
            <person name="Cruveiller S."/>
            <person name="Danchin A."/>
            <person name="Diard M."/>
            <person name="Dossat C."/>
            <person name="Karoui M.E."/>
            <person name="Frapy E."/>
            <person name="Garry L."/>
            <person name="Ghigo J.M."/>
            <person name="Gilles A.M."/>
            <person name="Johnson J."/>
            <person name="Le Bouguenec C."/>
            <person name="Lescat M."/>
            <person name="Mangenot S."/>
            <person name="Martinez-Jehanne V."/>
            <person name="Matic I."/>
            <person name="Nassif X."/>
            <person name="Oztas S."/>
            <person name="Petit M.A."/>
            <person name="Pichon C."/>
            <person name="Rouy Z."/>
            <person name="Ruf C.S."/>
            <person name="Schneider D."/>
            <person name="Tourret J."/>
            <person name="Vacherie B."/>
            <person name="Vallenet D."/>
            <person name="Medigue C."/>
            <person name="Rocha E.P.C."/>
            <person name="Denamur E."/>
        </authorList>
    </citation>
    <scope>NUCLEOTIDE SEQUENCE [LARGE SCALE GENOMIC DNA]</scope>
    <source>
        <strain>UMN026 / ExPEC</strain>
    </source>
</reference>
<gene>
    <name evidence="1" type="primary">glaH</name>
    <name type="ordered locus">ECUMN_2983</name>
</gene>
<accession>B7N6P3</accession>
<name>GLAH_ECOLU</name>
<protein>
    <recommendedName>
        <fullName evidence="1">Glutarate 2-hydroxylase</fullName>
        <shortName evidence="1">G-2-H</shortName>
        <ecNumber evidence="1">1.14.11.64</ecNumber>
    </recommendedName>
</protein>
<proteinExistence type="inferred from homology"/>
<keyword id="KW-0223">Dioxygenase</keyword>
<keyword id="KW-0408">Iron</keyword>
<keyword id="KW-0479">Metal-binding</keyword>
<keyword id="KW-0560">Oxidoreductase</keyword>
<sequence length="325" mass="37419">MNALTAVQNNAVDSGQDYSGFTLIPSAQSPRLLELTFTEQTTKQFLEQVAEWPVQALEYKSFLRFRVGKILDDLCANQLQPLLLKTLLNRAEGALLINAVGVDDVKQADEMVKLATAVAHLIGRSNFDAMSGQYYARFVVKNVDNSDSYLRQPHRVMELHNDGTYVEEITDYVLMMKIDEQNMQGGNSLLLHLDDWEHLDHYFRHPLARRPMRFAAPPSKNVSKDVFHPVFDVDQQGRPVMRYIDQFVQPKDFEEGVWLSELSDAIETSKGILSVPVPVGKFLLINNLFWLHGRDRFTPHPDLRRELMRQRGYFAYATHHYQTHQ</sequence>
<evidence type="ECO:0000255" key="1">
    <source>
        <dbReference type="HAMAP-Rule" id="MF_01083"/>
    </source>
</evidence>
<feature type="chain" id="PRO_1000136868" description="Glutarate 2-hydroxylase">
    <location>
        <begin position="1"/>
        <end position="325"/>
    </location>
</feature>
<feature type="binding site" evidence="1">
    <location>
        <position position="160"/>
    </location>
    <ligand>
        <name>Fe cation</name>
        <dbReference type="ChEBI" id="CHEBI:24875"/>
    </ligand>
</feature>
<feature type="binding site" evidence="1">
    <location>
        <position position="162"/>
    </location>
    <ligand>
        <name>Fe cation</name>
        <dbReference type="ChEBI" id="CHEBI:24875"/>
    </ligand>
</feature>
<feature type="binding site" evidence="1">
    <location>
        <position position="292"/>
    </location>
    <ligand>
        <name>Fe cation</name>
        <dbReference type="ChEBI" id="CHEBI:24875"/>
    </ligand>
</feature>
<comment type="function">
    <text evidence="1">Acts as an alpha-ketoglutarate-dependent dioxygenase catalyzing hydroxylation of glutarate (GA) to L-2-hydroxyglutarate (L2HG). Functions in a L-lysine degradation pathway that proceeds via cadaverine, glutarate and L-2-hydroxyglutarate.</text>
</comment>
<comment type="catalytic activity">
    <reaction evidence="1">
        <text>glutarate + 2-oxoglutarate + O2 = (S)-2-hydroxyglutarate + succinate + CO2</text>
        <dbReference type="Rhea" id="RHEA:13821"/>
        <dbReference type="ChEBI" id="CHEBI:15379"/>
        <dbReference type="ChEBI" id="CHEBI:16526"/>
        <dbReference type="ChEBI" id="CHEBI:16782"/>
        <dbReference type="ChEBI" id="CHEBI:16810"/>
        <dbReference type="ChEBI" id="CHEBI:30031"/>
        <dbReference type="ChEBI" id="CHEBI:30921"/>
        <dbReference type="EC" id="1.14.11.64"/>
    </reaction>
    <physiologicalReaction direction="left-to-right" evidence="1">
        <dbReference type="Rhea" id="RHEA:13822"/>
    </physiologicalReaction>
</comment>
<comment type="cofactor">
    <cofactor evidence="1">
        <name>Fe(2+)</name>
        <dbReference type="ChEBI" id="CHEBI:29033"/>
    </cofactor>
    <text evidence="1">Binds 1 Fe(2+) ion per subunit.</text>
</comment>
<comment type="pathway">
    <text evidence="1">Amino-acid degradation.</text>
</comment>
<comment type="subunit">
    <text evidence="1">Homotetramer.</text>
</comment>
<comment type="similarity">
    <text evidence="1">Belongs to the glutarate hydroxylase family.</text>
</comment>
<dbReference type="EC" id="1.14.11.64" evidence="1"/>
<dbReference type="EMBL" id="CU928163">
    <property type="protein sequence ID" value="CAR14154.1"/>
    <property type="molecule type" value="Genomic_DNA"/>
</dbReference>
<dbReference type="RefSeq" id="WP_001309687.1">
    <property type="nucleotide sequence ID" value="NC_011751.1"/>
</dbReference>
<dbReference type="RefSeq" id="YP_002413676.1">
    <property type="nucleotide sequence ID" value="NC_011751.1"/>
</dbReference>
<dbReference type="SMR" id="B7N6P3"/>
<dbReference type="STRING" id="585056.ECUMN_2983"/>
<dbReference type="KEGG" id="eum:ECUMN_2983"/>
<dbReference type="PATRIC" id="fig|585056.7.peg.3159"/>
<dbReference type="HOGENOM" id="CLU_075277_0_0_6"/>
<dbReference type="Proteomes" id="UP000007097">
    <property type="component" value="Chromosome"/>
</dbReference>
<dbReference type="GO" id="GO:0008198">
    <property type="term" value="F:ferrous iron binding"/>
    <property type="evidence" value="ECO:0007669"/>
    <property type="project" value="UniProtKB-UniRule"/>
</dbReference>
<dbReference type="GO" id="GO:0106343">
    <property type="term" value="F:glutarate dioxygenase activity"/>
    <property type="evidence" value="ECO:0007669"/>
    <property type="project" value="UniProtKB-EC"/>
</dbReference>
<dbReference type="GO" id="GO:0050498">
    <property type="term" value="F:oxidoreductase activity, acting on paired donors, with incorporation or reduction of molecular oxygen, with 2-oxoglutarate as one donor, and the other dehydrogenated"/>
    <property type="evidence" value="ECO:0007669"/>
    <property type="project" value="UniProtKB-UniRule"/>
</dbReference>
<dbReference type="GO" id="GO:0019477">
    <property type="term" value="P:L-lysine catabolic process"/>
    <property type="evidence" value="ECO:0007669"/>
    <property type="project" value="UniProtKB-UniRule"/>
</dbReference>
<dbReference type="CDD" id="cd00250">
    <property type="entry name" value="CAS_like"/>
    <property type="match status" value="1"/>
</dbReference>
<dbReference type="FunFam" id="3.60.130.10:FF:000004">
    <property type="entry name" value="Glutarate 2-hydroxylase"/>
    <property type="match status" value="1"/>
</dbReference>
<dbReference type="Gene3D" id="3.60.130.10">
    <property type="entry name" value="Clavaminate synthase-like"/>
    <property type="match status" value="1"/>
</dbReference>
<dbReference type="HAMAP" id="MF_01083">
    <property type="entry name" value="glutarate_hydroxylase"/>
    <property type="match status" value="1"/>
</dbReference>
<dbReference type="InterPro" id="IPR015038">
    <property type="entry name" value="GlaH"/>
</dbReference>
<dbReference type="InterPro" id="IPR042098">
    <property type="entry name" value="TauD-like_sf"/>
</dbReference>
<dbReference type="NCBIfam" id="NF002814">
    <property type="entry name" value="PRK02963.1"/>
    <property type="match status" value="1"/>
</dbReference>
<dbReference type="Pfam" id="PF08943">
    <property type="entry name" value="CsiD"/>
    <property type="match status" value="1"/>
</dbReference>
<dbReference type="SUPFAM" id="SSF51197">
    <property type="entry name" value="Clavaminate synthase-like"/>
    <property type="match status" value="1"/>
</dbReference>
<organism>
    <name type="scientific">Escherichia coli O17:K52:H18 (strain UMN026 / ExPEC)</name>
    <dbReference type="NCBI Taxonomy" id="585056"/>
    <lineage>
        <taxon>Bacteria</taxon>
        <taxon>Pseudomonadati</taxon>
        <taxon>Pseudomonadota</taxon>
        <taxon>Gammaproteobacteria</taxon>
        <taxon>Enterobacterales</taxon>
        <taxon>Enterobacteriaceae</taxon>
        <taxon>Escherichia</taxon>
    </lineage>
</organism>